<comment type="function">
    <text evidence="1">Located on the platform of the 30S subunit, it bridges several disparate RNA helices of the 16S rRNA. Forms part of the Shine-Dalgarno cleft in the 70S ribosome.</text>
</comment>
<comment type="subunit">
    <text evidence="1">Part of the 30S ribosomal subunit. Interacts with proteins S7 and S18. Binds to IF-3.</text>
</comment>
<comment type="similarity">
    <text evidence="1">Belongs to the universal ribosomal protein uS11 family.</text>
</comment>
<accession>A5F574</accession>
<accession>C3LXH2</accession>
<organism>
    <name type="scientific">Vibrio cholerae serotype O1 (strain ATCC 39541 / Classical Ogawa 395 / O395)</name>
    <dbReference type="NCBI Taxonomy" id="345073"/>
    <lineage>
        <taxon>Bacteria</taxon>
        <taxon>Pseudomonadati</taxon>
        <taxon>Pseudomonadota</taxon>
        <taxon>Gammaproteobacteria</taxon>
        <taxon>Vibrionales</taxon>
        <taxon>Vibrionaceae</taxon>
        <taxon>Vibrio</taxon>
    </lineage>
</organism>
<proteinExistence type="inferred from homology"/>
<protein>
    <recommendedName>
        <fullName evidence="1">Small ribosomal subunit protein uS11</fullName>
    </recommendedName>
    <alternativeName>
        <fullName evidence="2">30S ribosomal protein S11</fullName>
    </alternativeName>
</protein>
<dbReference type="EMBL" id="CP000627">
    <property type="protein sequence ID" value="ABQ19533.1"/>
    <property type="molecule type" value="Genomic_DNA"/>
</dbReference>
<dbReference type="EMBL" id="CP001235">
    <property type="protein sequence ID" value="ACP10672.1"/>
    <property type="molecule type" value="Genomic_DNA"/>
</dbReference>
<dbReference type="RefSeq" id="WP_001118870.1">
    <property type="nucleotide sequence ID" value="NZ_JAACZH010000007.1"/>
</dbReference>
<dbReference type="SMR" id="A5F574"/>
<dbReference type="GeneID" id="97171204"/>
<dbReference type="KEGG" id="vco:VC0395_A2151"/>
<dbReference type="KEGG" id="vcr:VC395_2686"/>
<dbReference type="PATRIC" id="fig|345073.21.peg.2586"/>
<dbReference type="eggNOG" id="COG0100">
    <property type="taxonomic scope" value="Bacteria"/>
</dbReference>
<dbReference type="HOGENOM" id="CLU_072439_5_0_6"/>
<dbReference type="OrthoDB" id="9806415at2"/>
<dbReference type="Proteomes" id="UP000000249">
    <property type="component" value="Chromosome 2"/>
</dbReference>
<dbReference type="GO" id="GO:1990904">
    <property type="term" value="C:ribonucleoprotein complex"/>
    <property type="evidence" value="ECO:0007669"/>
    <property type="project" value="UniProtKB-KW"/>
</dbReference>
<dbReference type="GO" id="GO:0005840">
    <property type="term" value="C:ribosome"/>
    <property type="evidence" value="ECO:0007669"/>
    <property type="project" value="UniProtKB-KW"/>
</dbReference>
<dbReference type="GO" id="GO:0019843">
    <property type="term" value="F:rRNA binding"/>
    <property type="evidence" value="ECO:0007669"/>
    <property type="project" value="UniProtKB-UniRule"/>
</dbReference>
<dbReference type="GO" id="GO:0003735">
    <property type="term" value="F:structural constituent of ribosome"/>
    <property type="evidence" value="ECO:0007669"/>
    <property type="project" value="InterPro"/>
</dbReference>
<dbReference type="GO" id="GO:0006412">
    <property type="term" value="P:translation"/>
    <property type="evidence" value="ECO:0007669"/>
    <property type="project" value="UniProtKB-UniRule"/>
</dbReference>
<dbReference type="FunFam" id="3.30.420.80:FF:000001">
    <property type="entry name" value="30S ribosomal protein S11"/>
    <property type="match status" value="1"/>
</dbReference>
<dbReference type="Gene3D" id="3.30.420.80">
    <property type="entry name" value="Ribosomal protein S11"/>
    <property type="match status" value="1"/>
</dbReference>
<dbReference type="HAMAP" id="MF_01310">
    <property type="entry name" value="Ribosomal_uS11"/>
    <property type="match status" value="1"/>
</dbReference>
<dbReference type="InterPro" id="IPR001971">
    <property type="entry name" value="Ribosomal_uS11"/>
</dbReference>
<dbReference type="InterPro" id="IPR019981">
    <property type="entry name" value="Ribosomal_uS11_bac-type"/>
</dbReference>
<dbReference type="InterPro" id="IPR018102">
    <property type="entry name" value="Ribosomal_uS11_CS"/>
</dbReference>
<dbReference type="InterPro" id="IPR036967">
    <property type="entry name" value="Ribosomal_uS11_sf"/>
</dbReference>
<dbReference type="NCBIfam" id="NF003698">
    <property type="entry name" value="PRK05309.1"/>
    <property type="match status" value="1"/>
</dbReference>
<dbReference type="NCBIfam" id="TIGR03632">
    <property type="entry name" value="uS11_bact"/>
    <property type="match status" value="1"/>
</dbReference>
<dbReference type="PANTHER" id="PTHR11759">
    <property type="entry name" value="40S RIBOSOMAL PROTEIN S14/30S RIBOSOMAL PROTEIN S11"/>
    <property type="match status" value="1"/>
</dbReference>
<dbReference type="Pfam" id="PF00411">
    <property type="entry name" value="Ribosomal_S11"/>
    <property type="match status" value="1"/>
</dbReference>
<dbReference type="PIRSF" id="PIRSF002131">
    <property type="entry name" value="Ribosomal_S11"/>
    <property type="match status" value="1"/>
</dbReference>
<dbReference type="SUPFAM" id="SSF53137">
    <property type="entry name" value="Translational machinery components"/>
    <property type="match status" value="1"/>
</dbReference>
<dbReference type="PROSITE" id="PS00054">
    <property type="entry name" value="RIBOSOMAL_S11"/>
    <property type="match status" value="1"/>
</dbReference>
<feature type="chain" id="PRO_1000073207" description="Small ribosomal subunit protein uS11">
    <location>
        <begin position="1"/>
        <end position="129"/>
    </location>
</feature>
<sequence length="129" mass="13890">MAKQPTRARKRVRKQVADGVAHIHASFNNTIVTITDRQGNALAWATAGGSGFRGSRKSTPFAAQVAAERCAEMAKEYGLKNLEVMVKGPGPGRESTVRALNAAGFRITNIVDATPIPHNGCRPPKKRRV</sequence>
<gene>
    <name evidence="1" type="primary">rpsK</name>
    <name type="ordered locus">VC0395_A2151</name>
    <name type="ordered locus">VC395_2686</name>
</gene>
<reference key="1">
    <citation type="submission" date="2007-03" db="EMBL/GenBank/DDBJ databases">
        <authorList>
            <person name="Heidelberg J."/>
        </authorList>
    </citation>
    <scope>NUCLEOTIDE SEQUENCE [LARGE SCALE GENOMIC DNA]</scope>
    <source>
        <strain>ATCC 39541 / Classical Ogawa 395 / O395</strain>
    </source>
</reference>
<reference key="2">
    <citation type="journal article" date="2008" name="PLoS ONE">
        <title>A recalibrated molecular clock and independent origins for the cholera pandemic clones.</title>
        <authorList>
            <person name="Feng L."/>
            <person name="Reeves P.R."/>
            <person name="Lan R."/>
            <person name="Ren Y."/>
            <person name="Gao C."/>
            <person name="Zhou Z."/>
            <person name="Ren Y."/>
            <person name="Cheng J."/>
            <person name="Wang W."/>
            <person name="Wang J."/>
            <person name="Qian W."/>
            <person name="Li D."/>
            <person name="Wang L."/>
        </authorList>
    </citation>
    <scope>NUCLEOTIDE SEQUENCE [LARGE SCALE GENOMIC DNA]</scope>
    <source>
        <strain>ATCC 39541 / Classical Ogawa 395 / O395</strain>
    </source>
</reference>
<evidence type="ECO:0000255" key="1">
    <source>
        <dbReference type="HAMAP-Rule" id="MF_01310"/>
    </source>
</evidence>
<evidence type="ECO:0000305" key="2"/>
<keyword id="KW-0687">Ribonucleoprotein</keyword>
<keyword id="KW-0689">Ribosomal protein</keyword>
<keyword id="KW-0694">RNA-binding</keyword>
<keyword id="KW-0699">rRNA-binding</keyword>
<name>RS11_VIBC3</name>